<reference key="1">
    <citation type="journal article" date="2004" name="Genome Res.">
        <title>Genome sequence of Haloarcula marismortui: a halophilic archaeon from the Dead Sea.</title>
        <authorList>
            <person name="Baliga N.S."/>
            <person name="Bonneau R."/>
            <person name="Facciotti M.T."/>
            <person name="Pan M."/>
            <person name="Glusman G."/>
            <person name="Deutsch E.W."/>
            <person name="Shannon P."/>
            <person name="Chiu Y."/>
            <person name="Weng R.S."/>
            <person name="Gan R.R."/>
            <person name="Hung P."/>
            <person name="Date S.V."/>
            <person name="Marcotte E."/>
            <person name="Hood L."/>
            <person name="Ng W.V."/>
        </authorList>
    </citation>
    <scope>NUCLEOTIDE SEQUENCE [LARGE SCALE GENOMIC DNA]</scope>
    <source>
        <strain>ATCC 43049 / DSM 3752 / JCM 8966 / VKM B-1809</strain>
    </source>
</reference>
<feature type="chain" id="PRO_0000122621" description="Probable aminomethyltransferase">
    <location>
        <begin position="1"/>
        <end position="363"/>
    </location>
</feature>
<keyword id="KW-0032">Aminotransferase</keyword>
<keyword id="KW-1185">Reference proteome</keyword>
<keyword id="KW-0808">Transferase</keyword>
<dbReference type="EC" id="2.1.2.10" evidence="1"/>
<dbReference type="EMBL" id="AY596297">
    <property type="protein sequence ID" value="AAV46422.1"/>
    <property type="status" value="ALT_INIT"/>
    <property type="molecule type" value="Genomic_DNA"/>
</dbReference>
<dbReference type="RefSeq" id="WP_011223662.1">
    <property type="nucleotide sequence ID" value="NC_006396.1"/>
</dbReference>
<dbReference type="SMR" id="Q5V230"/>
<dbReference type="STRING" id="272569.rrnAC1500"/>
<dbReference type="PaxDb" id="272569-rrnAC1500"/>
<dbReference type="EnsemblBacteria" id="AAV46422">
    <property type="protein sequence ID" value="AAV46422"/>
    <property type="gene ID" value="rrnAC1500"/>
</dbReference>
<dbReference type="GeneID" id="40152463"/>
<dbReference type="KEGG" id="hma:rrnAC1500"/>
<dbReference type="PATRIC" id="fig|272569.17.peg.2190"/>
<dbReference type="eggNOG" id="arCOG00756">
    <property type="taxonomic scope" value="Archaea"/>
</dbReference>
<dbReference type="HOGENOM" id="CLU_007884_10_2_2"/>
<dbReference type="Proteomes" id="UP000001169">
    <property type="component" value="Chromosome I"/>
</dbReference>
<dbReference type="GO" id="GO:0005960">
    <property type="term" value="C:glycine cleavage complex"/>
    <property type="evidence" value="ECO:0007669"/>
    <property type="project" value="InterPro"/>
</dbReference>
<dbReference type="GO" id="GO:0004047">
    <property type="term" value="F:aminomethyltransferase activity"/>
    <property type="evidence" value="ECO:0007669"/>
    <property type="project" value="UniProtKB-UniRule"/>
</dbReference>
<dbReference type="GO" id="GO:0008483">
    <property type="term" value="F:transaminase activity"/>
    <property type="evidence" value="ECO:0007669"/>
    <property type="project" value="UniProtKB-KW"/>
</dbReference>
<dbReference type="GO" id="GO:0019464">
    <property type="term" value="P:glycine decarboxylation via glycine cleavage system"/>
    <property type="evidence" value="ECO:0007669"/>
    <property type="project" value="UniProtKB-UniRule"/>
</dbReference>
<dbReference type="FunFam" id="2.40.30.110:FF:000003">
    <property type="entry name" value="Aminomethyltransferase"/>
    <property type="match status" value="1"/>
</dbReference>
<dbReference type="Gene3D" id="2.40.30.110">
    <property type="entry name" value="Aminomethyltransferase beta-barrel domains"/>
    <property type="match status" value="1"/>
</dbReference>
<dbReference type="Gene3D" id="3.30.70.1400">
    <property type="entry name" value="Aminomethyltransferase beta-barrel domains"/>
    <property type="match status" value="1"/>
</dbReference>
<dbReference type="Gene3D" id="4.10.1250.10">
    <property type="entry name" value="Aminomethyltransferase fragment"/>
    <property type="match status" value="1"/>
</dbReference>
<dbReference type="Gene3D" id="3.30.1360.120">
    <property type="entry name" value="Probable tRNA modification gtpase trme, domain 1"/>
    <property type="match status" value="1"/>
</dbReference>
<dbReference type="HAMAP" id="MF_00259">
    <property type="entry name" value="GcvT"/>
    <property type="match status" value="1"/>
</dbReference>
<dbReference type="InterPro" id="IPR006223">
    <property type="entry name" value="GCS_T"/>
</dbReference>
<dbReference type="InterPro" id="IPR022903">
    <property type="entry name" value="GCS_T_bac"/>
</dbReference>
<dbReference type="InterPro" id="IPR013977">
    <property type="entry name" value="GCST_C"/>
</dbReference>
<dbReference type="InterPro" id="IPR006222">
    <property type="entry name" value="GCV_T_N"/>
</dbReference>
<dbReference type="InterPro" id="IPR028896">
    <property type="entry name" value="GcvT/YgfZ/DmdA"/>
</dbReference>
<dbReference type="InterPro" id="IPR029043">
    <property type="entry name" value="GcvT/YgfZ_C"/>
</dbReference>
<dbReference type="InterPro" id="IPR027266">
    <property type="entry name" value="TrmE/GcvT_dom1"/>
</dbReference>
<dbReference type="NCBIfam" id="TIGR00528">
    <property type="entry name" value="gcvT"/>
    <property type="match status" value="1"/>
</dbReference>
<dbReference type="NCBIfam" id="NF001567">
    <property type="entry name" value="PRK00389.1"/>
    <property type="match status" value="1"/>
</dbReference>
<dbReference type="PANTHER" id="PTHR43757">
    <property type="entry name" value="AMINOMETHYLTRANSFERASE"/>
    <property type="match status" value="1"/>
</dbReference>
<dbReference type="PANTHER" id="PTHR43757:SF2">
    <property type="entry name" value="AMINOMETHYLTRANSFERASE, MITOCHONDRIAL"/>
    <property type="match status" value="1"/>
</dbReference>
<dbReference type="Pfam" id="PF01571">
    <property type="entry name" value="GCV_T"/>
    <property type="match status" value="1"/>
</dbReference>
<dbReference type="Pfam" id="PF08669">
    <property type="entry name" value="GCV_T_C"/>
    <property type="match status" value="1"/>
</dbReference>
<dbReference type="PIRSF" id="PIRSF006487">
    <property type="entry name" value="GcvT"/>
    <property type="match status" value="1"/>
</dbReference>
<dbReference type="SUPFAM" id="SSF101790">
    <property type="entry name" value="Aminomethyltransferase beta-barrel domain"/>
    <property type="match status" value="1"/>
</dbReference>
<dbReference type="SUPFAM" id="SSF103025">
    <property type="entry name" value="Folate-binding domain"/>
    <property type="match status" value="1"/>
</dbReference>
<gene>
    <name evidence="1" type="primary">gcvT</name>
    <name type="synonym">gcvT2</name>
    <name type="ordered locus">rrnAC1500</name>
</gene>
<sequence>MTLRAPPLSAIHERADASFTDFGGWEMPVEFESIRIEHEAVRSEAGKFDVSHMGQITVAGPDAATLTQRLTTNDVTVLDPGEAQYGAITDEDGIMLDDTVVYRLPEGAADEFLFIPNAGHDGEMTERWLSERDERGLDATVTNRTEEYAMIAVQGPDAPDLLSAETDVSLTALSRFEVAAGAVAGVDSLIARTGYTGEPGFEILCPPDDAGVVWDALECQPCGLGARDTLRLEMGFLLSGQEFHPVDEPRTPYEAGIGWTVKLDTEFVARDALEGVAADGPEEKLIGIELVDRGVPRHGYDVTTPDGEPIGHITSGTMSPTLGAPIALAYVPSAYAEPDKSVRVVVRGEPKKARTRSTPFLDR</sequence>
<evidence type="ECO:0000255" key="1">
    <source>
        <dbReference type="HAMAP-Rule" id="MF_00259"/>
    </source>
</evidence>
<evidence type="ECO:0000305" key="2"/>
<proteinExistence type="inferred from homology"/>
<name>GCST_HALMA</name>
<accession>Q5V230</accession>
<comment type="function">
    <text evidence="1">The glycine cleavage system catalyzes the degradation of glycine.</text>
</comment>
<comment type="catalytic activity">
    <reaction evidence="1">
        <text>N(6)-[(R)-S(8)-aminomethyldihydrolipoyl]-L-lysyl-[protein] + (6S)-5,6,7,8-tetrahydrofolate = N(6)-[(R)-dihydrolipoyl]-L-lysyl-[protein] + (6R)-5,10-methylene-5,6,7,8-tetrahydrofolate + NH4(+)</text>
        <dbReference type="Rhea" id="RHEA:16945"/>
        <dbReference type="Rhea" id="RHEA-COMP:10475"/>
        <dbReference type="Rhea" id="RHEA-COMP:10492"/>
        <dbReference type="ChEBI" id="CHEBI:15636"/>
        <dbReference type="ChEBI" id="CHEBI:28938"/>
        <dbReference type="ChEBI" id="CHEBI:57453"/>
        <dbReference type="ChEBI" id="CHEBI:83100"/>
        <dbReference type="ChEBI" id="CHEBI:83143"/>
        <dbReference type="EC" id="2.1.2.10"/>
    </reaction>
</comment>
<comment type="subunit">
    <text evidence="1">The glycine cleavage system is composed of four proteins: P, T, L and H.</text>
</comment>
<comment type="similarity">
    <text evidence="1">Belongs to the GcvT family.</text>
</comment>
<comment type="sequence caution" evidence="2">
    <conflict type="erroneous initiation">
        <sequence resource="EMBL-CDS" id="AAV46422"/>
    </conflict>
</comment>
<protein>
    <recommendedName>
        <fullName evidence="1">Probable aminomethyltransferase</fullName>
        <ecNumber evidence="1">2.1.2.10</ecNumber>
    </recommendedName>
    <alternativeName>
        <fullName evidence="1">Glycine cleavage system T protein</fullName>
    </alternativeName>
</protein>
<organism>
    <name type="scientific">Haloarcula marismortui (strain ATCC 43049 / DSM 3752 / JCM 8966 / VKM B-1809)</name>
    <name type="common">Halobacterium marismortui</name>
    <dbReference type="NCBI Taxonomy" id="272569"/>
    <lineage>
        <taxon>Archaea</taxon>
        <taxon>Methanobacteriati</taxon>
        <taxon>Methanobacteriota</taxon>
        <taxon>Stenosarchaea group</taxon>
        <taxon>Halobacteria</taxon>
        <taxon>Halobacteriales</taxon>
        <taxon>Haloarculaceae</taxon>
        <taxon>Haloarcula</taxon>
    </lineage>
</organism>